<dbReference type="EC" id="2.4.2.29" evidence="1"/>
<dbReference type="EMBL" id="AE009442">
    <property type="protein sequence ID" value="AAO28073.1"/>
    <property type="molecule type" value="Genomic_DNA"/>
</dbReference>
<dbReference type="RefSeq" id="WP_004572967.1">
    <property type="nucleotide sequence ID" value="NC_004556.1"/>
</dbReference>
<dbReference type="SMR" id="Q87EW6"/>
<dbReference type="GeneID" id="93903871"/>
<dbReference type="KEGG" id="xft:PD_0180"/>
<dbReference type="HOGENOM" id="CLU_022060_0_1_6"/>
<dbReference type="UniPathway" id="UPA00392"/>
<dbReference type="Proteomes" id="UP000002516">
    <property type="component" value="Chromosome"/>
</dbReference>
<dbReference type="GO" id="GO:0005829">
    <property type="term" value="C:cytosol"/>
    <property type="evidence" value="ECO:0007669"/>
    <property type="project" value="TreeGrafter"/>
</dbReference>
<dbReference type="GO" id="GO:0046872">
    <property type="term" value="F:metal ion binding"/>
    <property type="evidence" value="ECO:0007669"/>
    <property type="project" value="UniProtKB-KW"/>
</dbReference>
<dbReference type="GO" id="GO:0008479">
    <property type="term" value="F:tRNA-guanosine(34) queuine transglycosylase activity"/>
    <property type="evidence" value="ECO:0007669"/>
    <property type="project" value="UniProtKB-UniRule"/>
</dbReference>
<dbReference type="GO" id="GO:0008616">
    <property type="term" value="P:queuosine biosynthetic process"/>
    <property type="evidence" value="ECO:0007669"/>
    <property type="project" value="UniProtKB-UniRule"/>
</dbReference>
<dbReference type="GO" id="GO:0002099">
    <property type="term" value="P:tRNA wobble guanine modification"/>
    <property type="evidence" value="ECO:0007669"/>
    <property type="project" value="TreeGrafter"/>
</dbReference>
<dbReference type="GO" id="GO:0101030">
    <property type="term" value="P:tRNA-guanine transglycosylation"/>
    <property type="evidence" value="ECO:0007669"/>
    <property type="project" value="InterPro"/>
</dbReference>
<dbReference type="FunFam" id="3.20.20.105:FF:000001">
    <property type="entry name" value="Queuine tRNA-ribosyltransferase"/>
    <property type="match status" value="1"/>
</dbReference>
<dbReference type="Gene3D" id="3.20.20.105">
    <property type="entry name" value="Queuine tRNA-ribosyltransferase-like"/>
    <property type="match status" value="1"/>
</dbReference>
<dbReference type="HAMAP" id="MF_00168">
    <property type="entry name" value="Q_tRNA_Tgt"/>
    <property type="match status" value="1"/>
</dbReference>
<dbReference type="InterPro" id="IPR050076">
    <property type="entry name" value="ArchSynthase1/Queuine_TRR"/>
</dbReference>
<dbReference type="InterPro" id="IPR004803">
    <property type="entry name" value="TGT"/>
</dbReference>
<dbReference type="InterPro" id="IPR036511">
    <property type="entry name" value="TGT-like_sf"/>
</dbReference>
<dbReference type="InterPro" id="IPR002616">
    <property type="entry name" value="tRNA_ribo_trans-like"/>
</dbReference>
<dbReference type="NCBIfam" id="TIGR00430">
    <property type="entry name" value="Q_tRNA_tgt"/>
    <property type="match status" value="1"/>
</dbReference>
<dbReference type="NCBIfam" id="TIGR00449">
    <property type="entry name" value="tgt_general"/>
    <property type="match status" value="1"/>
</dbReference>
<dbReference type="PANTHER" id="PTHR46499">
    <property type="entry name" value="QUEUINE TRNA-RIBOSYLTRANSFERASE"/>
    <property type="match status" value="1"/>
</dbReference>
<dbReference type="PANTHER" id="PTHR46499:SF1">
    <property type="entry name" value="QUEUINE TRNA-RIBOSYLTRANSFERASE"/>
    <property type="match status" value="1"/>
</dbReference>
<dbReference type="Pfam" id="PF01702">
    <property type="entry name" value="TGT"/>
    <property type="match status" value="1"/>
</dbReference>
<dbReference type="SUPFAM" id="SSF51713">
    <property type="entry name" value="tRNA-guanine transglycosylase"/>
    <property type="match status" value="1"/>
</dbReference>
<evidence type="ECO:0000255" key="1">
    <source>
        <dbReference type="HAMAP-Rule" id="MF_00168"/>
    </source>
</evidence>
<feature type="chain" id="PRO_0000135560" description="Queuine tRNA-ribosyltransferase">
    <location>
        <begin position="1"/>
        <end position="377"/>
    </location>
</feature>
<feature type="region of interest" description="RNA binding" evidence="1">
    <location>
        <begin position="248"/>
        <end position="254"/>
    </location>
</feature>
<feature type="region of interest" description="RNA binding; important for wobble base 34 recognition" evidence="1">
    <location>
        <begin position="272"/>
        <end position="276"/>
    </location>
</feature>
<feature type="active site" description="Proton acceptor" evidence="1">
    <location>
        <position position="92"/>
    </location>
</feature>
<feature type="active site" description="Nucleophile" evidence="1">
    <location>
        <position position="267"/>
    </location>
</feature>
<feature type="binding site" evidence="1">
    <location>
        <begin position="92"/>
        <end position="96"/>
    </location>
    <ligand>
        <name>substrate</name>
    </ligand>
</feature>
<feature type="binding site" evidence="1">
    <location>
        <position position="146"/>
    </location>
    <ligand>
        <name>substrate</name>
    </ligand>
</feature>
<feature type="binding site" evidence="1">
    <location>
        <position position="190"/>
    </location>
    <ligand>
        <name>substrate</name>
    </ligand>
</feature>
<feature type="binding site" evidence="1">
    <location>
        <position position="217"/>
    </location>
    <ligand>
        <name>substrate</name>
    </ligand>
</feature>
<feature type="binding site" evidence="1">
    <location>
        <position position="305"/>
    </location>
    <ligand>
        <name>Zn(2+)</name>
        <dbReference type="ChEBI" id="CHEBI:29105"/>
    </ligand>
</feature>
<feature type="binding site" evidence="1">
    <location>
        <position position="307"/>
    </location>
    <ligand>
        <name>Zn(2+)</name>
        <dbReference type="ChEBI" id="CHEBI:29105"/>
    </ligand>
</feature>
<feature type="binding site" evidence="1">
    <location>
        <position position="310"/>
    </location>
    <ligand>
        <name>Zn(2+)</name>
        <dbReference type="ChEBI" id="CHEBI:29105"/>
    </ligand>
</feature>
<feature type="binding site" evidence="1">
    <location>
        <position position="337"/>
    </location>
    <ligand>
        <name>Zn(2+)</name>
        <dbReference type="ChEBI" id="CHEBI:29105"/>
    </ligand>
</feature>
<gene>
    <name evidence="1" type="primary">tgt</name>
    <name type="ordered locus">PD_0180</name>
</gene>
<keyword id="KW-0328">Glycosyltransferase</keyword>
<keyword id="KW-0479">Metal-binding</keyword>
<keyword id="KW-0671">Queuosine biosynthesis</keyword>
<keyword id="KW-1185">Reference proteome</keyword>
<keyword id="KW-0808">Transferase</keyword>
<keyword id="KW-0819">tRNA processing</keyword>
<keyword id="KW-0862">Zinc</keyword>
<sequence length="377" mass="41373">MSRLQFQLQATDGAARRGQLSFPCGTVQTPTFMPVGTYGAVKGVLPGQLCDLGAEIILGNTFHLFLRPGLEVIADHGGLHGFMRWNGPILTDSGGFQVFSLAHRRKISEQGVTFAAPTDGAQVFLGPEESMKIQKVLNSDVVMIFDECTPYPATEDVARDSMELSLRWAQRSRDAHDALDNDAALFGIIQGGVHPDLRGRSLDGLQAIGFDGYGIGGLAVGESESERNVILEYLHPRLPTDRPRYLMGVGRPEDLVESVARGVDMFDCVMPTRHARNGQYFTGFGTVKIRNACYARDVDPIEQGCGCPACVGGYTRAYLRHLDRCNEMLASMLGSLHNLWYYETLMANMRAAITAGTFFAFRRSFYLARGLDPPPLP</sequence>
<protein>
    <recommendedName>
        <fullName evidence="1">Queuine tRNA-ribosyltransferase</fullName>
        <ecNumber evidence="1">2.4.2.29</ecNumber>
    </recommendedName>
    <alternativeName>
        <fullName evidence="1">Guanine insertion enzyme</fullName>
    </alternativeName>
    <alternativeName>
        <fullName evidence="1">tRNA-guanine transglycosylase</fullName>
    </alternativeName>
</protein>
<organism>
    <name type="scientific">Xylella fastidiosa (strain Temecula1 / ATCC 700964)</name>
    <dbReference type="NCBI Taxonomy" id="183190"/>
    <lineage>
        <taxon>Bacteria</taxon>
        <taxon>Pseudomonadati</taxon>
        <taxon>Pseudomonadota</taxon>
        <taxon>Gammaproteobacteria</taxon>
        <taxon>Lysobacterales</taxon>
        <taxon>Lysobacteraceae</taxon>
        <taxon>Xylella</taxon>
    </lineage>
</organism>
<name>TGT_XYLFT</name>
<accession>Q87EW6</accession>
<proteinExistence type="inferred from homology"/>
<reference key="1">
    <citation type="journal article" date="2003" name="J. Bacteriol.">
        <title>Comparative analyses of the complete genome sequences of Pierce's disease and citrus variegated chlorosis strains of Xylella fastidiosa.</title>
        <authorList>
            <person name="Van Sluys M.A."/>
            <person name="de Oliveira M.C."/>
            <person name="Monteiro-Vitorello C.B."/>
            <person name="Miyaki C.Y."/>
            <person name="Furlan L.R."/>
            <person name="Camargo L.E.A."/>
            <person name="da Silva A.C.R."/>
            <person name="Moon D.H."/>
            <person name="Takita M.A."/>
            <person name="Lemos E.G.M."/>
            <person name="Machado M.A."/>
            <person name="Ferro M.I.T."/>
            <person name="da Silva F.R."/>
            <person name="Goldman M.H.S."/>
            <person name="Goldman G.H."/>
            <person name="Lemos M.V.F."/>
            <person name="El-Dorry H."/>
            <person name="Tsai S.M."/>
            <person name="Carrer H."/>
            <person name="Carraro D.M."/>
            <person name="de Oliveira R.C."/>
            <person name="Nunes L.R."/>
            <person name="Siqueira W.J."/>
            <person name="Coutinho L.L."/>
            <person name="Kimura E.T."/>
            <person name="Ferro E.S."/>
            <person name="Harakava R."/>
            <person name="Kuramae E.E."/>
            <person name="Marino C.L."/>
            <person name="Giglioti E."/>
            <person name="Abreu I.L."/>
            <person name="Alves L.M.C."/>
            <person name="do Amaral A.M."/>
            <person name="Baia G.S."/>
            <person name="Blanco S.R."/>
            <person name="Brito M.S."/>
            <person name="Cannavan F.S."/>
            <person name="Celestino A.V."/>
            <person name="da Cunha A.F."/>
            <person name="Fenille R.C."/>
            <person name="Ferro J.A."/>
            <person name="Formighieri E.F."/>
            <person name="Kishi L.T."/>
            <person name="Leoni S.G."/>
            <person name="Oliveira A.R."/>
            <person name="Rosa V.E. Jr."/>
            <person name="Sassaki F.T."/>
            <person name="Sena J.A.D."/>
            <person name="de Souza A.A."/>
            <person name="Truffi D."/>
            <person name="Tsukumo F."/>
            <person name="Yanai G.M."/>
            <person name="Zaros L.G."/>
            <person name="Civerolo E.L."/>
            <person name="Simpson A.J.G."/>
            <person name="Almeida N.F. Jr."/>
            <person name="Setubal J.C."/>
            <person name="Kitajima J.P."/>
        </authorList>
    </citation>
    <scope>NUCLEOTIDE SEQUENCE [LARGE SCALE GENOMIC DNA]</scope>
    <source>
        <strain>Temecula1 / ATCC 700964</strain>
    </source>
</reference>
<comment type="function">
    <text evidence="1">Catalyzes the base-exchange of a guanine (G) residue with the queuine precursor 7-aminomethyl-7-deazaguanine (PreQ1) at position 34 (anticodon wobble position) in tRNAs with GU(N) anticodons (tRNA-Asp, -Asn, -His and -Tyr). Catalysis occurs through a double-displacement mechanism. The nucleophile active site attacks the C1' of nucleotide 34 to detach the guanine base from the RNA, forming a covalent enzyme-RNA intermediate. The proton acceptor active site deprotonates the incoming PreQ1, allowing a nucleophilic attack on the C1' of the ribose to form the product. After dissociation, two additional enzymatic reactions on the tRNA convert PreQ1 to queuine (Q), resulting in the hypermodified nucleoside queuosine (7-(((4,5-cis-dihydroxy-2-cyclopenten-1-yl)amino)methyl)-7-deazaguanosine).</text>
</comment>
<comment type="catalytic activity">
    <reaction evidence="1">
        <text>7-aminomethyl-7-carbaguanine + guanosine(34) in tRNA = 7-aminomethyl-7-carbaguanosine(34) in tRNA + guanine</text>
        <dbReference type="Rhea" id="RHEA:24104"/>
        <dbReference type="Rhea" id="RHEA-COMP:10341"/>
        <dbReference type="Rhea" id="RHEA-COMP:10342"/>
        <dbReference type="ChEBI" id="CHEBI:16235"/>
        <dbReference type="ChEBI" id="CHEBI:58703"/>
        <dbReference type="ChEBI" id="CHEBI:74269"/>
        <dbReference type="ChEBI" id="CHEBI:82833"/>
        <dbReference type="EC" id="2.4.2.29"/>
    </reaction>
</comment>
<comment type="cofactor">
    <cofactor evidence="1">
        <name>Zn(2+)</name>
        <dbReference type="ChEBI" id="CHEBI:29105"/>
    </cofactor>
    <text evidence="1">Binds 1 zinc ion per subunit.</text>
</comment>
<comment type="pathway">
    <text evidence="1">tRNA modification; tRNA-queuosine biosynthesis.</text>
</comment>
<comment type="subunit">
    <text evidence="1">Homodimer. Within each dimer, one monomer is responsible for RNA recognition and catalysis, while the other monomer binds to the replacement base PreQ1.</text>
</comment>
<comment type="similarity">
    <text evidence="1">Belongs to the queuine tRNA-ribosyltransferase family.</text>
</comment>